<proteinExistence type="uncertain"/>
<reference key="1">
    <citation type="journal article" date="1995" name="Nucleic Acids Res.">
        <title>Analysis of the Escherichia coli genome VI: DNA sequence of the region from 92.8 through 100 minutes.</title>
        <authorList>
            <person name="Burland V.D."/>
            <person name="Plunkett G. III"/>
            <person name="Sofia H.J."/>
            <person name="Daniels D.L."/>
            <person name="Blattner F.R."/>
        </authorList>
    </citation>
    <scope>NUCLEOTIDE SEQUENCE [LARGE SCALE GENOMIC DNA]</scope>
    <source>
        <strain>K12 / MG1655 / ATCC 47076</strain>
    </source>
</reference>
<reference key="2">
    <citation type="journal article" date="1997" name="Science">
        <title>The complete genome sequence of Escherichia coli K-12.</title>
        <authorList>
            <person name="Blattner F.R."/>
            <person name="Plunkett G. III"/>
            <person name="Bloch C.A."/>
            <person name="Perna N.T."/>
            <person name="Burland V."/>
            <person name="Riley M."/>
            <person name="Collado-Vides J."/>
            <person name="Glasner J.D."/>
            <person name="Rode C.K."/>
            <person name="Mayhew G.F."/>
            <person name="Gregor J."/>
            <person name="Davis N.W."/>
            <person name="Kirkpatrick H.A."/>
            <person name="Goeden M.A."/>
            <person name="Rose D.J."/>
            <person name="Mau B."/>
            <person name="Shao Y."/>
        </authorList>
    </citation>
    <scope>NUCLEOTIDE SEQUENCE [LARGE SCALE GENOMIC DNA]</scope>
    <scope>SEQUENCE REVISION TO 25</scope>
    <source>
        <strain>K12 / MG1655 / ATCC 47076</strain>
    </source>
</reference>
<reference key="3">
    <citation type="journal article" date="2006" name="Mol. Syst. Biol.">
        <title>Highly accurate genome sequences of Escherichia coli K-12 strains MG1655 and W3110.</title>
        <authorList>
            <person name="Hayashi K."/>
            <person name="Morooka N."/>
            <person name="Yamamoto Y."/>
            <person name="Fujita K."/>
            <person name="Isono K."/>
            <person name="Choi S."/>
            <person name="Ohtsubo E."/>
            <person name="Baba T."/>
            <person name="Wanner B.L."/>
            <person name="Mori H."/>
            <person name="Horiuchi T."/>
        </authorList>
    </citation>
    <scope>NUCLEOTIDE SEQUENCE [LARGE SCALE GENOMIC DNA]</scope>
    <source>
        <strain>K12 / W3110 / ATCC 27325 / DSM 5911</strain>
    </source>
</reference>
<organism>
    <name type="scientific">Escherichia coli (strain K12)</name>
    <dbReference type="NCBI Taxonomy" id="83333"/>
    <lineage>
        <taxon>Bacteria</taxon>
        <taxon>Pseudomonadati</taxon>
        <taxon>Pseudomonadota</taxon>
        <taxon>Gammaproteobacteria</taxon>
        <taxon>Enterobacterales</taxon>
        <taxon>Enterobacteriaceae</taxon>
        <taxon>Escherichia</taxon>
    </lineage>
</organism>
<dbReference type="EMBL" id="U14003">
    <property type="protein sequence ID" value="AAA97182.1"/>
    <property type="molecule type" value="Genomic_DNA"/>
</dbReference>
<dbReference type="EMBL" id="U00096">
    <property type="status" value="NOT_ANNOTATED_CDS"/>
    <property type="molecule type" value="Genomic_DNA"/>
</dbReference>
<dbReference type="EMBL" id="AP009048">
    <property type="protein sequence ID" value="BAE78277.1"/>
    <property type="molecule type" value="Genomic_DNA"/>
</dbReference>
<dbReference type="PIR" id="H65241">
    <property type="entry name" value="H65241"/>
</dbReference>
<dbReference type="SMR" id="Q47719"/>
<dbReference type="BioGRID" id="4262738">
    <property type="interactions" value="10"/>
</dbReference>
<dbReference type="FunCoup" id="Q47719">
    <property type="interactions" value="154"/>
</dbReference>
<dbReference type="IntAct" id="Q47719">
    <property type="interactions" value="5"/>
</dbReference>
<dbReference type="KEGG" id="ecj:JW4246"/>
<dbReference type="eggNOG" id="COG2085">
    <property type="taxonomic scope" value="Bacteria"/>
</dbReference>
<dbReference type="HOGENOM" id="CLU_127566_0_0_6"/>
<dbReference type="InParanoid" id="Q47719"/>
<dbReference type="OMA" id="THEYIID"/>
<dbReference type="Proteomes" id="UP000000625">
    <property type="component" value="Chromosome"/>
</dbReference>
<dbReference type="Gene3D" id="3.40.50.720">
    <property type="entry name" value="NAD(P)-binding Rossmann-like Domain"/>
    <property type="match status" value="1"/>
</dbReference>
<name>YJHV_ECOLI</name>
<protein>
    <recommendedName>
        <fullName>Putative protein YjhV</fullName>
    </recommendedName>
</protein>
<keyword id="KW-1185">Reference proteome</keyword>
<feature type="chain" id="PRO_0000169843" description="Putative protein YjhV">
    <location>
        <begin position="1"/>
        <end position="137"/>
    </location>
</feature>
<feature type="region of interest" description="Disordered" evidence="1">
    <location>
        <begin position="1"/>
        <end position="20"/>
    </location>
</feature>
<feature type="compositionally biased region" description="Polar residues" evidence="1">
    <location>
        <begin position="1"/>
        <end position="16"/>
    </location>
</feature>
<sequence>MVGYHQTNQKTDTGKTLTRRPVLVDHNRLPEGSRGRLAVAVAGDHPAAVQVTMTLVNDTGFDPVFSGSIAESWRQQPCTPSYCCDWEAATMLRAFPLAKKGEGRARLPSLYASFGKLGETPTHEDIIDNNRSINWPV</sequence>
<gene>
    <name type="primary">yjhV</name>
    <name type="ordered locus">b4286</name>
    <name type="ordered locus">JW4246</name>
</gene>
<comment type="miscellaneous">
    <text evidence="2">Encoded in the KpLE2 phage-like element.</text>
</comment>
<comment type="caution">
    <text evidence="2">Could be the product of a pseudogene, it may be missing up to 90 N-terminal residues compared to orthologs.</text>
</comment>
<accession>Q47719</accession>
<accession>P76815</accession>
<accession>Q2M629</accession>
<evidence type="ECO:0000256" key="1">
    <source>
        <dbReference type="SAM" id="MobiDB-lite"/>
    </source>
</evidence>
<evidence type="ECO:0000305" key="2"/>